<organism>
    <name type="scientific">Vulpes vulpes</name>
    <name type="common">Red fox</name>
    <dbReference type="NCBI Taxonomy" id="9627"/>
    <lineage>
        <taxon>Eukaryota</taxon>
        <taxon>Metazoa</taxon>
        <taxon>Chordata</taxon>
        <taxon>Craniata</taxon>
        <taxon>Vertebrata</taxon>
        <taxon>Euteleostomi</taxon>
        <taxon>Mammalia</taxon>
        <taxon>Eutheria</taxon>
        <taxon>Laurasiatheria</taxon>
        <taxon>Carnivora</taxon>
        <taxon>Caniformia</taxon>
        <taxon>Canidae</taxon>
        <taxon>Vulpes</taxon>
    </lineage>
</organism>
<feature type="chain" id="PRO_0000073042" description="Double-headed protease inhibitor, submandibular gland">
    <location>
        <begin position="1"/>
        <end position="115"/>
    </location>
</feature>
<feature type="domain" description="Kazal-like 1" evidence="1">
    <location>
        <begin position="6"/>
        <end position="66"/>
    </location>
</feature>
<feature type="domain" description="Kazal-like 2" evidence="1">
    <location>
        <begin position="67"/>
        <end position="115"/>
    </location>
</feature>
<feature type="site" description="Reactive bond 1 for trypsin">
    <location>
        <begin position="26"/>
        <end position="27"/>
    </location>
</feature>
<feature type="site" description="Reactive bond 2 for elastase">
    <location>
        <begin position="77"/>
        <end position="78"/>
    </location>
</feature>
<feature type="disulfide bond" evidence="1">
    <location>
        <begin position="12"/>
        <end position="46"/>
    </location>
</feature>
<feature type="disulfide bond" evidence="1">
    <location>
        <begin position="24"/>
        <end position="43"/>
    </location>
</feature>
<feature type="disulfide bond" evidence="1">
    <location>
        <begin position="32"/>
        <end position="64"/>
    </location>
</feature>
<feature type="disulfide bond" evidence="1">
    <location>
        <begin position="68"/>
        <end position="97"/>
    </location>
</feature>
<feature type="disulfide bond" evidence="1">
    <location>
        <begin position="75"/>
        <end position="94"/>
    </location>
</feature>
<feature type="disulfide bond" evidence="1">
    <location>
        <begin position="83"/>
        <end position="115"/>
    </location>
</feature>
<accession>P08479</accession>
<name>IPSG_VULVU</name>
<dbReference type="PIR" id="S03371">
    <property type="entry name" value="S03371"/>
</dbReference>
<dbReference type="SMR" id="P08479"/>
<dbReference type="STRING" id="9627.ENSVVUP00000029128"/>
<dbReference type="MEROPS" id="I01.016"/>
<dbReference type="MEROPS" id="I01.017"/>
<dbReference type="Proteomes" id="UP000286640">
    <property type="component" value="Unplaced"/>
</dbReference>
<dbReference type="GO" id="GO:0005576">
    <property type="term" value="C:extracellular region"/>
    <property type="evidence" value="ECO:0007669"/>
    <property type="project" value="UniProtKB-SubCell"/>
</dbReference>
<dbReference type="GO" id="GO:0004867">
    <property type="term" value="F:serine-type endopeptidase inhibitor activity"/>
    <property type="evidence" value="ECO:0007669"/>
    <property type="project" value="UniProtKB-KW"/>
</dbReference>
<dbReference type="FunFam" id="3.30.60.30:FF:000037">
    <property type="entry name" value="Ovomucoid"/>
    <property type="match status" value="1"/>
</dbReference>
<dbReference type="Gene3D" id="3.30.60.30">
    <property type="match status" value="2"/>
</dbReference>
<dbReference type="InterPro" id="IPR051597">
    <property type="entry name" value="Bifunctional_prot_inhibitor"/>
</dbReference>
<dbReference type="InterPro" id="IPR002350">
    <property type="entry name" value="Kazal_dom"/>
</dbReference>
<dbReference type="InterPro" id="IPR036058">
    <property type="entry name" value="Kazal_dom_sf"/>
</dbReference>
<dbReference type="InterPro" id="IPR001239">
    <property type="entry name" value="Prot_inh_Kazal-m"/>
</dbReference>
<dbReference type="PANTHER" id="PTHR47729:SF1">
    <property type="entry name" value="OVOMUCOID-LIKE-RELATED"/>
    <property type="match status" value="1"/>
</dbReference>
<dbReference type="PANTHER" id="PTHR47729">
    <property type="entry name" value="SERINE PEPTIDASE INHIBITOR, KAZAL TYPE 2, TANDEM DUPLICATE 1-RELATED"/>
    <property type="match status" value="1"/>
</dbReference>
<dbReference type="Pfam" id="PF00050">
    <property type="entry name" value="Kazal_1"/>
    <property type="match status" value="2"/>
</dbReference>
<dbReference type="PRINTS" id="PR00290">
    <property type="entry name" value="KAZALINHBTR"/>
</dbReference>
<dbReference type="SMART" id="SM00280">
    <property type="entry name" value="KAZAL"/>
    <property type="match status" value="2"/>
</dbReference>
<dbReference type="SUPFAM" id="SSF100895">
    <property type="entry name" value="Kazal-type serine protease inhibitors"/>
    <property type="match status" value="2"/>
</dbReference>
<dbReference type="PROSITE" id="PS00282">
    <property type="entry name" value="KAZAL_1"/>
    <property type="match status" value="2"/>
</dbReference>
<dbReference type="PROSITE" id="PS51465">
    <property type="entry name" value="KAZAL_2"/>
    <property type="match status" value="2"/>
</dbReference>
<reference key="1">
    <citation type="journal article" date="1988" name="Protein Seq. Data Anal.">
        <title>The amino-acid sequence of the double-headed proteinase inhibitor from fox (Vulpes vulpes) submandibular glands.</title>
        <authorList>
            <person name="Reisinger P.W.M."/>
            <person name="Hochstrasser K."/>
            <person name="Wachter E."/>
        </authorList>
    </citation>
    <scope>PROTEIN SEQUENCE</scope>
    <source>
        <tissue>Submandibular gland</tissue>
    </source>
</reference>
<sequence length="115" mass="12818">DPPPAIGREVDCSSYKGKGSQIACPRHLQPICGTDHNTYSNECMFCALTLNKEFEVRKLQDTACDIECTEYSDMCTMDYRPLCGSDGKNYSNKCIFCNAVVRSRGTIFLAKHGEC</sequence>
<protein>
    <recommendedName>
        <fullName>Double-headed protease inhibitor, submandibular gland</fullName>
    </recommendedName>
</protein>
<keyword id="KW-0903">Direct protein sequencing</keyword>
<keyword id="KW-1015">Disulfide bond</keyword>
<keyword id="KW-0646">Protease inhibitor</keyword>
<keyword id="KW-1185">Reference proteome</keyword>
<keyword id="KW-0677">Repeat</keyword>
<keyword id="KW-0964">Secreted</keyword>
<keyword id="KW-0722">Serine protease inhibitor</keyword>
<evidence type="ECO:0000255" key="1">
    <source>
        <dbReference type="PROSITE-ProRule" id="PRU00798"/>
    </source>
</evidence>
<proteinExistence type="evidence at protein level"/>
<comment type="function">
    <text>This inhibitor is composed of two homologous actively inhibiting halves: one which inhibits trypsin, the other which inhibits elastase.</text>
</comment>
<comment type="subcellular location">
    <subcellularLocation>
        <location>Secreted</location>
    </subcellularLocation>
</comment>